<dbReference type="EC" id="5.6.1.7" evidence="1"/>
<dbReference type="EMBL" id="CP001336">
    <property type="protein sequence ID" value="ACL19462.1"/>
    <property type="molecule type" value="Genomic_DNA"/>
</dbReference>
<dbReference type="RefSeq" id="WP_015943412.1">
    <property type="nucleotide sequence ID" value="NC_011830.1"/>
</dbReference>
<dbReference type="SMR" id="B8FNT7"/>
<dbReference type="KEGG" id="dhd:Dhaf_1406"/>
<dbReference type="HOGENOM" id="CLU_016503_3_0_9"/>
<dbReference type="Proteomes" id="UP000007726">
    <property type="component" value="Chromosome"/>
</dbReference>
<dbReference type="GO" id="GO:0005737">
    <property type="term" value="C:cytoplasm"/>
    <property type="evidence" value="ECO:0007669"/>
    <property type="project" value="UniProtKB-SubCell"/>
</dbReference>
<dbReference type="GO" id="GO:0005524">
    <property type="term" value="F:ATP binding"/>
    <property type="evidence" value="ECO:0007669"/>
    <property type="project" value="UniProtKB-UniRule"/>
</dbReference>
<dbReference type="GO" id="GO:0140662">
    <property type="term" value="F:ATP-dependent protein folding chaperone"/>
    <property type="evidence" value="ECO:0007669"/>
    <property type="project" value="InterPro"/>
</dbReference>
<dbReference type="GO" id="GO:0016853">
    <property type="term" value="F:isomerase activity"/>
    <property type="evidence" value="ECO:0007669"/>
    <property type="project" value="UniProtKB-KW"/>
</dbReference>
<dbReference type="GO" id="GO:0051082">
    <property type="term" value="F:unfolded protein binding"/>
    <property type="evidence" value="ECO:0007669"/>
    <property type="project" value="UniProtKB-UniRule"/>
</dbReference>
<dbReference type="GO" id="GO:0042026">
    <property type="term" value="P:protein refolding"/>
    <property type="evidence" value="ECO:0007669"/>
    <property type="project" value="UniProtKB-UniRule"/>
</dbReference>
<dbReference type="CDD" id="cd03344">
    <property type="entry name" value="GroEL"/>
    <property type="match status" value="1"/>
</dbReference>
<dbReference type="FunFam" id="1.10.560.10:FF:000001">
    <property type="entry name" value="60 kDa chaperonin"/>
    <property type="match status" value="1"/>
</dbReference>
<dbReference type="FunFam" id="3.50.7.10:FF:000001">
    <property type="entry name" value="60 kDa chaperonin"/>
    <property type="match status" value="1"/>
</dbReference>
<dbReference type="Gene3D" id="3.50.7.10">
    <property type="entry name" value="GroEL"/>
    <property type="match status" value="1"/>
</dbReference>
<dbReference type="Gene3D" id="1.10.560.10">
    <property type="entry name" value="GroEL-like equatorial domain"/>
    <property type="match status" value="1"/>
</dbReference>
<dbReference type="Gene3D" id="3.30.260.10">
    <property type="entry name" value="TCP-1-like chaperonin intermediate domain"/>
    <property type="match status" value="1"/>
</dbReference>
<dbReference type="HAMAP" id="MF_00600">
    <property type="entry name" value="CH60"/>
    <property type="match status" value="1"/>
</dbReference>
<dbReference type="InterPro" id="IPR018370">
    <property type="entry name" value="Chaperonin_Cpn60_CS"/>
</dbReference>
<dbReference type="InterPro" id="IPR001844">
    <property type="entry name" value="Cpn60/GroEL"/>
</dbReference>
<dbReference type="InterPro" id="IPR002423">
    <property type="entry name" value="Cpn60/GroEL/TCP-1"/>
</dbReference>
<dbReference type="InterPro" id="IPR027409">
    <property type="entry name" value="GroEL-like_apical_dom_sf"/>
</dbReference>
<dbReference type="InterPro" id="IPR027413">
    <property type="entry name" value="GROEL-like_equatorial_sf"/>
</dbReference>
<dbReference type="InterPro" id="IPR027410">
    <property type="entry name" value="TCP-1-like_intermed_sf"/>
</dbReference>
<dbReference type="NCBIfam" id="TIGR02348">
    <property type="entry name" value="GroEL"/>
    <property type="match status" value="1"/>
</dbReference>
<dbReference type="NCBIfam" id="NF000592">
    <property type="entry name" value="PRK00013.1"/>
    <property type="match status" value="1"/>
</dbReference>
<dbReference type="NCBIfam" id="NF009487">
    <property type="entry name" value="PRK12849.1"/>
    <property type="match status" value="1"/>
</dbReference>
<dbReference type="NCBIfam" id="NF009488">
    <property type="entry name" value="PRK12850.1"/>
    <property type="match status" value="1"/>
</dbReference>
<dbReference type="NCBIfam" id="NF009489">
    <property type="entry name" value="PRK12851.1"/>
    <property type="match status" value="1"/>
</dbReference>
<dbReference type="PANTHER" id="PTHR45633">
    <property type="entry name" value="60 KDA HEAT SHOCK PROTEIN, MITOCHONDRIAL"/>
    <property type="match status" value="1"/>
</dbReference>
<dbReference type="Pfam" id="PF00118">
    <property type="entry name" value="Cpn60_TCP1"/>
    <property type="match status" value="1"/>
</dbReference>
<dbReference type="PRINTS" id="PR00298">
    <property type="entry name" value="CHAPERONIN60"/>
</dbReference>
<dbReference type="SUPFAM" id="SSF52029">
    <property type="entry name" value="GroEL apical domain-like"/>
    <property type="match status" value="1"/>
</dbReference>
<dbReference type="SUPFAM" id="SSF48592">
    <property type="entry name" value="GroEL equatorial domain-like"/>
    <property type="match status" value="1"/>
</dbReference>
<dbReference type="SUPFAM" id="SSF54849">
    <property type="entry name" value="GroEL-intermediate domain like"/>
    <property type="match status" value="1"/>
</dbReference>
<dbReference type="PROSITE" id="PS00296">
    <property type="entry name" value="CHAPERONINS_CPN60"/>
    <property type="match status" value="1"/>
</dbReference>
<name>CH60_DESHD</name>
<comment type="function">
    <text evidence="1">Together with its co-chaperonin GroES, plays an essential role in assisting protein folding. The GroEL-GroES system forms a nano-cage that allows encapsulation of the non-native substrate proteins and provides a physical environment optimized to promote and accelerate protein folding.</text>
</comment>
<comment type="catalytic activity">
    <reaction evidence="1">
        <text>ATP + H2O + a folded polypeptide = ADP + phosphate + an unfolded polypeptide.</text>
        <dbReference type="EC" id="5.6.1.7"/>
    </reaction>
</comment>
<comment type="subunit">
    <text evidence="1">Forms a cylinder of 14 subunits composed of two heptameric rings stacked back-to-back. Interacts with the co-chaperonin GroES.</text>
</comment>
<comment type="subcellular location">
    <subcellularLocation>
        <location evidence="1">Cytoplasm</location>
    </subcellularLocation>
</comment>
<comment type="similarity">
    <text evidence="1">Belongs to the chaperonin (HSP60) family.</text>
</comment>
<feature type="chain" id="PRO_1000147029" description="Chaperonin GroEL">
    <location>
        <begin position="1"/>
        <end position="544"/>
    </location>
</feature>
<feature type="binding site" evidence="1">
    <location>
        <begin position="29"/>
        <end position="32"/>
    </location>
    <ligand>
        <name>ATP</name>
        <dbReference type="ChEBI" id="CHEBI:30616"/>
    </ligand>
</feature>
<feature type="binding site" evidence="1">
    <location>
        <begin position="86"/>
        <end position="90"/>
    </location>
    <ligand>
        <name>ATP</name>
        <dbReference type="ChEBI" id="CHEBI:30616"/>
    </ligand>
</feature>
<feature type="binding site" evidence="1">
    <location>
        <position position="413"/>
    </location>
    <ligand>
        <name>ATP</name>
        <dbReference type="ChEBI" id="CHEBI:30616"/>
    </ligand>
</feature>
<feature type="binding site" evidence="1">
    <location>
        <begin position="476"/>
        <end position="478"/>
    </location>
    <ligand>
        <name>ATP</name>
        <dbReference type="ChEBI" id="CHEBI:30616"/>
    </ligand>
</feature>
<feature type="binding site" evidence="1">
    <location>
        <position position="492"/>
    </location>
    <ligand>
        <name>ATP</name>
        <dbReference type="ChEBI" id="CHEBI:30616"/>
    </ligand>
</feature>
<evidence type="ECO:0000255" key="1">
    <source>
        <dbReference type="HAMAP-Rule" id="MF_00600"/>
    </source>
</evidence>
<proteinExistence type="inferred from homology"/>
<reference key="1">
    <citation type="journal article" date="2012" name="BMC Microbiol.">
        <title>Genome sequence of Desulfitobacterium hafniense DCB-2, a Gram-positive anaerobe capable of dehalogenation and metal reduction.</title>
        <authorList>
            <person name="Kim S.H."/>
            <person name="Harzman C."/>
            <person name="Davis J.K."/>
            <person name="Hutcheson R."/>
            <person name="Broderick J.B."/>
            <person name="Marsh T.L."/>
            <person name="Tiedje J.M."/>
        </authorList>
    </citation>
    <scope>NUCLEOTIDE SEQUENCE [LARGE SCALE GENOMIC DNA]</scope>
    <source>
        <strain>DSM 10664 / DCB-2</strain>
    </source>
</reference>
<organism>
    <name type="scientific">Desulfitobacterium hafniense (strain DSM 10664 / DCB-2)</name>
    <dbReference type="NCBI Taxonomy" id="272564"/>
    <lineage>
        <taxon>Bacteria</taxon>
        <taxon>Bacillati</taxon>
        <taxon>Bacillota</taxon>
        <taxon>Clostridia</taxon>
        <taxon>Eubacteriales</taxon>
        <taxon>Desulfitobacteriaceae</taxon>
        <taxon>Desulfitobacterium</taxon>
    </lineage>
</organism>
<keyword id="KW-0067">ATP-binding</keyword>
<keyword id="KW-0143">Chaperone</keyword>
<keyword id="KW-0963">Cytoplasm</keyword>
<keyword id="KW-0413">Isomerase</keyword>
<keyword id="KW-0547">Nucleotide-binding</keyword>
<accession>B8FNT7</accession>
<sequence>MAKQIVFNEEARRALERGVNALAESVRVTLGPKGRNVVLDKKFGAPLITNDGVTIAREIELEDPFENMGAQLVKEVATKTNDVAGDGTTTATVLAQAIIREGLKNVAAGANPMGIKRGIEKAVESVVEDIKTNAKPIESKESIAQVASISAGDDNIGVLISDAMEKVGKDGVITVEEAKGMTTELKVVEGMQFDRGYLSAYMITDTDKMEAILNDPYILITDKKIGAIADILPVLEKVVQAGRQLLIIAEDIEGEALATLILNKLRGTFTCVAVKAPGFGDRRKAMLEDIAILTGGTVITEDLGLKLENTTIDMLGRARQIRVTKEETTIVEGSGSQDDIKSRVEAIKKQIDETTSDFDREKLQERLAKLAGGVAVIQVGAATEVEMKEKKLRIEDALAATRAAVEEGIVAGGGCALVDAAKALDSLKLTGDEKTGVAIVCRALEEPLRQIANNAGFEGSIVVEKVRNGGRGVGFNALTEAYEDMIAAGIVDPAKVTRSALQNAASIAAMLLTTECLVSDIPSKDNGAAAMAGMGGMGGMGGMM</sequence>
<gene>
    <name evidence="1" type="primary">groEL</name>
    <name evidence="1" type="synonym">groL</name>
    <name type="ordered locus">Dhaf_1406</name>
</gene>
<protein>
    <recommendedName>
        <fullName evidence="1">Chaperonin GroEL</fullName>
        <ecNumber evidence="1">5.6.1.7</ecNumber>
    </recommendedName>
    <alternativeName>
        <fullName evidence="1">60 kDa chaperonin</fullName>
    </alternativeName>
    <alternativeName>
        <fullName evidence="1">Chaperonin-60</fullName>
        <shortName evidence="1">Cpn60</shortName>
    </alternativeName>
</protein>